<reference key="1">
    <citation type="journal article" date="2005" name="Nature">
        <title>The genome of the social amoeba Dictyostelium discoideum.</title>
        <authorList>
            <person name="Eichinger L."/>
            <person name="Pachebat J.A."/>
            <person name="Gloeckner G."/>
            <person name="Rajandream M.A."/>
            <person name="Sucgang R."/>
            <person name="Berriman M."/>
            <person name="Song J."/>
            <person name="Olsen R."/>
            <person name="Szafranski K."/>
            <person name="Xu Q."/>
            <person name="Tunggal B."/>
            <person name="Kummerfeld S."/>
            <person name="Madera M."/>
            <person name="Konfortov B.A."/>
            <person name="Rivero F."/>
            <person name="Bankier A.T."/>
            <person name="Lehmann R."/>
            <person name="Hamlin N."/>
            <person name="Davies R."/>
            <person name="Gaudet P."/>
            <person name="Fey P."/>
            <person name="Pilcher K."/>
            <person name="Chen G."/>
            <person name="Saunders D."/>
            <person name="Sodergren E.J."/>
            <person name="Davis P."/>
            <person name="Kerhornou A."/>
            <person name="Nie X."/>
            <person name="Hall N."/>
            <person name="Anjard C."/>
            <person name="Hemphill L."/>
            <person name="Bason N."/>
            <person name="Farbrother P."/>
            <person name="Desany B."/>
            <person name="Just E."/>
            <person name="Morio T."/>
            <person name="Rost R."/>
            <person name="Churcher C.M."/>
            <person name="Cooper J."/>
            <person name="Haydock S."/>
            <person name="van Driessche N."/>
            <person name="Cronin A."/>
            <person name="Goodhead I."/>
            <person name="Muzny D.M."/>
            <person name="Mourier T."/>
            <person name="Pain A."/>
            <person name="Lu M."/>
            <person name="Harper D."/>
            <person name="Lindsay R."/>
            <person name="Hauser H."/>
            <person name="James K.D."/>
            <person name="Quiles M."/>
            <person name="Madan Babu M."/>
            <person name="Saito T."/>
            <person name="Buchrieser C."/>
            <person name="Wardroper A."/>
            <person name="Felder M."/>
            <person name="Thangavelu M."/>
            <person name="Johnson D."/>
            <person name="Knights A."/>
            <person name="Loulseged H."/>
            <person name="Mungall K.L."/>
            <person name="Oliver K."/>
            <person name="Price C."/>
            <person name="Quail M.A."/>
            <person name="Urushihara H."/>
            <person name="Hernandez J."/>
            <person name="Rabbinowitsch E."/>
            <person name="Steffen D."/>
            <person name="Sanders M."/>
            <person name="Ma J."/>
            <person name="Kohara Y."/>
            <person name="Sharp S."/>
            <person name="Simmonds M.N."/>
            <person name="Spiegler S."/>
            <person name="Tivey A."/>
            <person name="Sugano S."/>
            <person name="White B."/>
            <person name="Walker D."/>
            <person name="Woodward J.R."/>
            <person name="Winckler T."/>
            <person name="Tanaka Y."/>
            <person name="Shaulsky G."/>
            <person name="Schleicher M."/>
            <person name="Weinstock G.M."/>
            <person name="Rosenthal A."/>
            <person name="Cox E.C."/>
            <person name="Chisholm R.L."/>
            <person name="Gibbs R.A."/>
            <person name="Loomis W.F."/>
            <person name="Platzer M."/>
            <person name="Kay R.R."/>
            <person name="Williams J.G."/>
            <person name="Dear P.H."/>
            <person name="Noegel A.A."/>
            <person name="Barrell B.G."/>
            <person name="Kuspa A."/>
        </authorList>
    </citation>
    <scope>NUCLEOTIDE SEQUENCE [LARGE SCALE GENOMIC DNA]</scope>
    <source>
        <strain>AX4</strain>
    </source>
</reference>
<reference key="2">
    <citation type="journal article" date="2006" name="Mol. Cell. Proteomics">
        <title>Proteomics fingerprinting of phagosome maturation and evidence for the role of a Galpha during uptake.</title>
        <authorList>
            <person name="Gotthardt D."/>
            <person name="Blancheteau V."/>
            <person name="Bosserhoff A."/>
            <person name="Ruppert T."/>
            <person name="Delorenzi M."/>
            <person name="Soldati T."/>
        </authorList>
    </citation>
    <scope>IDENTIFICATION BY MASS SPECTROMETRY [LARGE SCALE ANALYSIS]</scope>
    <source>
        <strain>AX2</strain>
    </source>
</reference>
<organism>
    <name type="scientific">Dictyostelium discoideum</name>
    <name type="common">Social amoeba</name>
    <dbReference type="NCBI Taxonomy" id="44689"/>
    <lineage>
        <taxon>Eukaryota</taxon>
        <taxon>Amoebozoa</taxon>
        <taxon>Evosea</taxon>
        <taxon>Eumycetozoa</taxon>
        <taxon>Dictyostelia</taxon>
        <taxon>Dictyosteliales</taxon>
        <taxon>Dictyosteliaceae</taxon>
        <taxon>Dictyostelium</taxon>
    </lineage>
</organism>
<name>PCY2_DICDI</name>
<feature type="chain" id="PRO_0000327721" description="Ethanolamine-phosphate cytidylyltransferase">
    <location>
        <begin position="1"/>
        <end position="360"/>
    </location>
</feature>
<feature type="binding site" evidence="1">
    <location>
        <begin position="207"/>
        <end position="208"/>
    </location>
    <ligand>
        <name>CTP</name>
        <dbReference type="ChEBI" id="CHEBI:37563"/>
    </ligand>
</feature>
<feature type="binding site" evidence="1">
    <location>
        <begin position="215"/>
        <end position="218"/>
    </location>
    <ligand>
        <name>CTP</name>
        <dbReference type="ChEBI" id="CHEBI:37563"/>
    </ligand>
</feature>
<feature type="binding site" evidence="1">
    <location>
        <position position="243"/>
    </location>
    <ligand>
        <name>CTP</name>
        <dbReference type="ChEBI" id="CHEBI:37563"/>
    </ligand>
</feature>
<feature type="binding site" evidence="1">
    <location>
        <begin position="291"/>
        <end position="294"/>
    </location>
    <ligand>
        <name>CTP</name>
        <dbReference type="ChEBI" id="CHEBI:37563"/>
    </ligand>
</feature>
<feature type="binding site" evidence="1">
    <location>
        <begin position="321"/>
        <end position="325"/>
    </location>
    <ligand>
        <name>CTP</name>
        <dbReference type="ChEBI" id="CHEBI:37563"/>
    </ligand>
</feature>
<comment type="function">
    <text evidence="2">Ethanolamine-phosphate cytidylyltransferase that catalyzes the second step in the synthesis of phosphatidylethanolamine (PE) from ethanolamine via the CDP-ethanolamine pathway.</text>
</comment>
<comment type="catalytic activity">
    <reaction evidence="2">
        <text>phosphoethanolamine + CTP + H(+) = CDP-ethanolamine + diphosphate</text>
        <dbReference type="Rhea" id="RHEA:24592"/>
        <dbReference type="ChEBI" id="CHEBI:15378"/>
        <dbReference type="ChEBI" id="CHEBI:33019"/>
        <dbReference type="ChEBI" id="CHEBI:37563"/>
        <dbReference type="ChEBI" id="CHEBI:57876"/>
        <dbReference type="ChEBI" id="CHEBI:58190"/>
        <dbReference type="EC" id="2.7.7.14"/>
    </reaction>
    <physiologicalReaction direction="left-to-right" evidence="2">
        <dbReference type="Rhea" id="RHEA:24593"/>
    </physiologicalReaction>
</comment>
<comment type="pathway">
    <text evidence="2">Phospholipid metabolism; phosphatidylethanolamine biosynthesis; phosphatidylethanolamine from ethanolamine: step 2/3.</text>
</comment>
<comment type="similarity">
    <text evidence="3">Belongs to the cytidylyltransferase family.</text>
</comment>
<sequence length="360" mass="40301">MSTTTNKKPIRVYVDGCFDLMHFGHANALRQARELGDILVVGVHTDEEIAKNKGPPVMNEQERYKAVRACKWADEVAEGAPYTLTEEYLDSLNCDFCVHGEDISVGADGKDVYEGIKKSGKFRFIKRTEGVSTTELVGRMLLCTKDHLQNVSGEQTSPLGGVNPNVLHKQSPYTSLSHFLPTTRKIVQFSEGRSPKPNDKIIYMDGGFDLFHVGHTEALKQARALGDYLIVGVHDDRVVHEQKGSNFPIMNLHERVLSVLSCRYVDEVVIGAPFSVTKDMIDSLHINVVVHGDDQVVLGPEGGVDPYKLPRELGIYKEVKHTEGLTATEIVKRIIDNRLQYEARNRKKEAKEINFIEQSN</sequence>
<protein>
    <recommendedName>
        <fullName>Ethanolamine-phosphate cytidylyltransferase</fullName>
        <ecNumber evidence="2">2.7.7.14</ecNumber>
    </recommendedName>
    <alternativeName>
        <fullName>CTP:phosphoethanolamine cytidylyltransferase</fullName>
    </alternativeName>
    <alternativeName>
        <fullName>Phosphorylethanolamine transferase</fullName>
    </alternativeName>
</protein>
<dbReference type="EC" id="2.7.7.14" evidence="2"/>
<dbReference type="EMBL" id="AAFI02000005">
    <property type="protein sequence ID" value="EAL72499.1"/>
    <property type="molecule type" value="Genomic_DNA"/>
</dbReference>
<dbReference type="RefSeq" id="XP_646687.1">
    <property type="nucleotide sequence ID" value="XM_641595.1"/>
</dbReference>
<dbReference type="SMR" id="Q55BZ4"/>
<dbReference type="FunCoup" id="Q55BZ4">
    <property type="interactions" value="790"/>
</dbReference>
<dbReference type="STRING" id="44689.Q55BZ4"/>
<dbReference type="PaxDb" id="44689-DDB0191331"/>
<dbReference type="EnsemblProtists" id="EAL72499">
    <property type="protein sequence ID" value="EAL72499"/>
    <property type="gene ID" value="DDB_G0270298"/>
</dbReference>
<dbReference type="GeneID" id="8617662"/>
<dbReference type="KEGG" id="ddi:DDB_G0270298"/>
<dbReference type="dictyBase" id="DDB_G0270298">
    <property type="gene designation" value="pctA"/>
</dbReference>
<dbReference type="VEuPathDB" id="AmoebaDB:DDB_G0270298"/>
<dbReference type="eggNOG" id="KOG2803">
    <property type="taxonomic scope" value="Eukaryota"/>
</dbReference>
<dbReference type="HOGENOM" id="CLU_031246_2_2_1"/>
<dbReference type="InParanoid" id="Q55BZ4"/>
<dbReference type="OMA" id="QCKYINA"/>
<dbReference type="PhylomeDB" id="Q55BZ4"/>
<dbReference type="Reactome" id="R-DDI-1483213">
    <property type="pathway name" value="Synthesis of PE"/>
</dbReference>
<dbReference type="UniPathway" id="UPA00558">
    <property type="reaction ID" value="UER00742"/>
</dbReference>
<dbReference type="PRO" id="PR:Q55BZ4"/>
<dbReference type="Proteomes" id="UP000002195">
    <property type="component" value="Chromosome 1"/>
</dbReference>
<dbReference type="GO" id="GO:0005737">
    <property type="term" value="C:cytoplasm"/>
    <property type="evidence" value="ECO:0000318"/>
    <property type="project" value="GO_Central"/>
</dbReference>
<dbReference type="GO" id="GO:0045335">
    <property type="term" value="C:phagocytic vesicle"/>
    <property type="evidence" value="ECO:0007005"/>
    <property type="project" value="dictyBase"/>
</dbReference>
<dbReference type="GO" id="GO:0004306">
    <property type="term" value="F:ethanolamine-phosphate cytidylyltransferase activity"/>
    <property type="evidence" value="ECO:0000250"/>
    <property type="project" value="UniProtKB"/>
</dbReference>
<dbReference type="GO" id="GO:0006646">
    <property type="term" value="P:phosphatidylethanolamine biosynthetic process"/>
    <property type="evidence" value="ECO:0000250"/>
    <property type="project" value="dictyBase"/>
</dbReference>
<dbReference type="CDD" id="cd02174">
    <property type="entry name" value="CCT"/>
    <property type="match status" value="1"/>
</dbReference>
<dbReference type="CDD" id="cd02173">
    <property type="entry name" value="ECT"/>
    <property type="match status" value="1"/>
</dbReference>
<dbReference type="FunFam" id="3.40.50.620:FF:000249">
    <property type="entry name" value="Ethanolamine-phosphate cytidylyltransferase"/>
    <property type="match status" value="1"/>
</dbReference>
<dbReference type="Gene3D" id="3.40.50.620">
    <property type="entry name" value="HUPs"/>
    <property type="match status" value="2"/>
</dbReference>
<dbReference type="InterPro" id="IPR041723">
    <property type="entry name" value="CCT"/>
</dbReference>
<dbReference type="InterPro" id="IPR004821">
    <property type="entry name" value="Cyt_trans-like"/>
</dbReference>
<dbReference type="InterPro" id="IPR044608">
    <property type="entry name" value="Ect1/PCYT2"/>
</dbReference>
<dbReference type="InterPro" id="IPR014729">
    <property type="entry name" value="Rossmann-like_a/b/a_fold"/>
</dbReference>
<dbReference type="NCBIfam" id="TIGR00125">
    <property type="entry name" value="cyt_tran_rel"/>
    <property type="match status" value="2"/>
</dbReference>
<dbReference type="PANTHER" id="PTHR45780">
    <property type="entry name" value="ETHANOLAMINE-PHOSPHATE CYTIDYLYLTRANSFERASE"/>
    <property type="match status" value="1"/>
</dbReference>
<dbReference type="PANTHER" id="PTHR45780:SF2">
    <property type="entry name" value="ETHANOLAMINE-PHOSPHATE CYTIDYLYLTRANSFERASE"/>
    <property type="match status" value="1"/>
</dbReference>
<dbReference type="Pfam" id="PF01467">
    <property type="entry name" value="CTP_transf_like"/>
    <property type="match status" value="2"/>
</dbReference>
<dbReference type="SUPFAM" id="SSF52374">
    <property type="entry name" value="Nucleotidylyl transferase"/>
    <property type="match status" value="2"/>
</dbReference>
<accession>Q55BZ4</accession>
<evidence type="ECO:0000250" key="1"/>
<evidence type="ECO:0000250" key="2">
    <source>
        <dbReference type="UniProtKB" id="Q99447"/>
    </source>
</evidence>
<evidence type="ECO:0000305" key="3"/>
<keyword id="KW-0444">Lipid biosynthesis</keyword>
<keyword id="KW-0443">Lipid metabolism</keyword>
<keyword id="KW-0548">Nucleotidyltransferase</keyword>
<keyword id="KW-0594">Phospholipid biosynthesis</keyword>
<keyword id="KW-1208">Phospholipid metabolism</keyword>
<keyword id="KW-1185">Reference proteome</keyword>
<keyword id="KW-0808">Transferase</keyword>
<proteinExistence type="evidence at protein level"/>
<gene>
    <name type="primary">pctA</name>
    <name type="ORF">DDB_G0270298</name>
</gene>